<name>TRPA_LEPBP</name>
<keyword id="KW-0028">Amino-acid biosynthesis</keyword>
<keyword id="KW-0057">Aromatic amino acid biosynthesis</keyword>
<keyword id="KW-0456">Lyase</keyword>
<keyword id="KW-1185">Reference proteome</keyword>
<keyword id="KW-0822">Tryptophan biosynthesis</keyword>
<proteinExistence type="inferred from homology"/>
<organism>
    <name type="scientific">Leptospira biflexa serovar Patoc (strain Patoc 1 / ATCC 23582 / Paris)</name>
    <dbReference type="NCBI Taxonomy" id="456481"/>
    <lineage>
        <taxon>Bacteria</taxon>
        <taxon>Pseudomonadati</taxon>
        <taxon>Spirochaetota</taxon>
        <taxon>Spirochaetia</taxon>
        <taxon>Leptospirales</taxon>
        <taxon>Leptospiraceae</taxon>
        <taxon>Leptospira</taxon>
    </lineage>
</organism>
<evidence type="ECO:0000255" key="1">
    <source>
        <dbReference type="HAMAP-Rule" id="MF_00131"/>
    </source>
</evidence>
<dbReference type="EC" id="4.2.1.20" evidence="1"/>
<dbReference type="EMBL" id="AY828567">
    <property type="protein sequence ID" value="AAV85863.1"/>
    <property type="molecule type" value="Genomic_DNA"/>
</dbReference>
<dbReference type="EMBL" id="CP000786">
    <property type="protein sequence ID" value="ABZ98686.1"/>
    <property type="molecule type" value="Genomic_DNA"/>
</dbReference>
<dbReference type="RefSeq" id="WP_012389546.1">
    <property type="nucleotide sequence ID" value="NC_010602.1"/>
</dbReference>
<dbReference type="SMR" id="Q5MI53"/>
<dbReference type="STRING" id="456481.LEPBI_I2607"/>
<dbReference type="KEGG" id="lbi:LEPBI_I2607"/>
<dbReference type="HOGENOM" id="CLU_016734_0_0_12"/>
<dbReference type="OrthoDB" id="9804578at2"/>
<dbReference type="BioCyc" id="LBIF456481:LEPBI_RS12825-MONOMER"/>
<dbReference type="UniPathway" id="UPA00035">
    <property type="reaction ID" value="UER00044"/>
</dbReference>
<dbReference type="Proteomes" id="UP000001847">
    <property type="component" value="Chromosome I"/>
</dbReference>
<dbReference type="GO" id="GO:0005829">
    <property type="term" value="C:cytosol"/>
    <property type="evidence" value="ECO:0007669"/>
    <property type="project" value="TreeGrafter"/>
</dbReference>
<dbReference type="GO" id="GO:0004834">
    <property type="term" value="F:tryptophan synthase activity"/>
    <property type="evidence" value="ECO:0007669"/>
    <property type="project" value="UniProtKB-UniRule"/>
</dbReference>
<dbReference type="CDD" id="cd04724">
    <property type="entry name" value="Tryptophan_synthase_alpha"/>
    <property type="match status" value="1"/>
</dbReference>
<dbReference type="FunFam" id="3.20.20.70:FF:000037">
    <property type="entry name" value="Tryptophan synthase alpha chain"/>
    <property type="match status" value="1"/>
</dbReference>
<dbReference type="Gene3D" id="3.20.20.70">
    <property type="entry name" value="Aldolase class I"/>
    <property type="match status" value="1"/>
</dbReference>
<dbReference type="HAMAP" id="MF_00131">
    <property type="entry name" value="Trp_synth_alpha"/>
    <property type="match status" value="1"/>
</dbReference>
<dbReference type="InterPro" id="IPR013785">
    <property type="entry name" value="Aldolase_TIM"/>
</dbReference>
<dbReference type="InterPro" id="IPR011060">
    <property type="entry name" value="RibuloseP-bd_barrel"/>
</dbReference>
<dbReference type="InterPro" id="IPR018204">
    <property type="entry name" value="Trp_synthase_alpha_AS"/>
</dbReference>
<dbReference type="InterPro" id="IPR002028">
    <property type="entry name" value="Trp_synthase_suA"/>
</dbReference>
<dbReference type="NCBIfam" id="TIGR00262">
    <property type="entry name" value="trpA"/>
    <property type="match status" value="1"/>
</dbReference>
<dbReference type="PANTHER" id="PTHR43406:SF1">
    <property type="entry name" value="TRYPTOPHAN SYNTHASE ALPHA CHAIN, CHLOROPLASTIC"/>
    <property type="match status" value="1"/>
</dbReference>
<dbReference type="PANTHER" id="PTHR43406">
    <property type="entry name" value="TRYPTOPHAN SYNTHASE, ALPHA CHAIN"/>
    <property type="match status" value="1"/>
</dbReference>
<dbReference type="Pfam" id="PF00290">
    <property type="entry name" value="Trp_syntA"/>
    <property type="match status" value="1"/>
</dbReference>
<dbReference type="SUPFAM" id="SSF51366">
    <property type="entry name" value="Ribulose-phoshate binding barrel"/>
    <property type="match status" value="1"/>
</dbReference>
<dbReference type="PROSITE" id="PS00167">
    <property type="entry name" value="TRP_SYNTHASE_ALPHA"/>
    <property type="match status" value="1"/>
</dbReference>
<sequence length="266" mass="29698">MSKIKELFESGKFKSAFIPYFTLGDPNYNDSIEFGKTILDGGADILELGIPFSDPVADGPVIQRAVARSLKNKFSFDEIFRVTKQIHLHKQETPLVYLTYFNPIYHCGITKFLDNAKDSGVVGLVIPDLPFDTIESETLFQELRLRDMDLIHLVTPASTKKRIEALRKTSTGFIYYVTSFGVTGERREFSVDLKERIRFLKDTIQLPICAGFGISTPEQASQIAGYADGIIIGSAIQRVIEENGQDASKAKNVLADYITKIRASIS</sequence>
<protein>
    <recommendedName>
        <fullName evidence="1">Tryptophan synthase alpha chain</fullName>
        <ecNumber evidence="1">4.2.1.20</ecNumber>
    </recommendedName>
</protein>
<feature type="chain" id="PRO_0000098800" description="Tryptophan synthase alpha chain">
    <location>
        <begin position="1"/>
        <end position="266"/>
    </location>
</feature>
<feature type="active site" description="Proton acceptor" evidence="1">
    <location>
        <position position="47"/>
    </location>
</feature>
<feature type="active site" description="Proton acceptor" evidence="1">
    <location>
        <position position="58"/>
    </location>
</feature>
<comment type="function">
    <text evidence="1">The alpha subunit is responsible for the aldol cleavage of indoleglycerol phosphate to indole and glyceraldehyde 3-phosphate.</text>
</comment>
<comment type="catalytic activity">
    <reaction evidence="1">
        <text>(1S,2R)-1-C-(indol-3-yl)glycerol 3-phosphate + L-serine = D-glyceraldehyde 3-phosphate + L-tryptophan + H2O</text>
        <dbReference type="Rhea" id="RHEA:10532"/>
        <dbReference type="ChEBI" id="CHEBI:15377"/>
        <dbReference type="ChEBI" id="CHEBI:33384"/>
        <dbReference type="ChEBI" id="CHEBI:57912"/>
        <dbReference type="ChEBI" id="CHEBI:58866"/>
        <dbReference type="ChEBI" id="CHEBI:59776"/>
        <dbReference type="EC" id="4.2.1.20"/>
    </reaction>
</comment>
<comment type="pathway">
    <text evidence="1">Amino-acid biosynthesis; L-tryptophan biosynthesis; L-tryptophan from chorismate: step 5/5.</text>
</comment>
<comment type="subunit">
    <text evidence="1">Tetramer of two alpha and two beta chains.</text>
</comment>
<comment type="similarity">
    <text evidence="1">Belongs to the TrpA family.</text>
</comment>
<accession>Q5MI53</accession>
<accession>B0SM56</accession>
<gene>
    <name evidence="1" type="primary">trpA</name>
    <name type="ordered locus">LEPBI_I2607</name>
</gene>
<reference key="1">
    <citation type="journal article" date="2005" name="J. Bacteriol.">
        <title>Isolation and characterization of FecA- and FeoB-mediated iron acquisition systems of the spirochete Leptospira biflexa by random insertional mutagenesis.</title>
        <authorList>
            <person name="Louvel H."/>
            <person name="Saint Girons I."/>
            <person name="Picardeau M."/>
        </authorList>
    </citation>
    <scope>NUCLEOTIDE SEQUENCE [GENOMIC DNA]</scope>
</reference>
<reference key="2">
    <citation type="journal article" date="2008" name="PLoS ONE">
        <title>Genome sequence of the saprophyte Leptospira biflexa provides insights into the evolution of Leptospira and the pathogenesis of leptospirosis.</title>
        <authorList>
            <person name="Picardeau M."/>
            <person name="Bulach D.M."/>
            <person name="Bouchier C."/>
            <person name="Zuerner R.L."/>
            <person name="Zidane N."/>
            <person name="Wilson P.J."/>
            <person name="Creno S."/>
            <person name="Kuczek E.S."/>
            <person name="Bommezzadri S."/>
            <person name="Davis J.C."/>
            <person name="McGrath A."/>
            <person name="Johnson M.J."/>
            <person name="Boursaux-Eude C."/>
            <person name="Seemann T."/>
            <person name="Rouy Z."/>
            <person name="Coppel R.L."/>
            <person name="Rood J.I."/>
            <person name="Lajus A."/>
            <person name="Davies J.K."/>
            <person name="Medigue C."/>
            <person name="Adler B."/>
        </authorList>
    </citation>
    <scope>NUCLEOTIDE SEQUENCE [LARGE SCALE GENOMIC DNA]</scope>
    <source>
        <strain>Patoc 1 / ATCC 23582 / Paris</strain>
    </source>
</reference>